<protein>
    <recommendedName>
        <fullName evidence="1">DNA mismatch repair protein MutL</fullName>
    </recommendedName>
</protein>
<evidence type="ECO:0000255" key="1">
    <source>
        <dbReference type="HAMAP-Rule" id="MF_00149"/>
    </source>
</evidence>
<evidence type="ECO:0000256" key="2">
    <source>
        <dbReference type="SAM" id="MobiDB-lite"/>
    </source>
</evidence>
<keyword id="KW-0227">DNA damage</keyword>
<keyword id="KW-0234">DNA repair</keyword>
<keyword id="KW-1185">Reference proteome</keyword>
<proteinExistence type="inferred from homology"/>
<reference key="1">
    <citation type="journal article" date="2009" name="J. Bacteriol.">
        <title>Complete genome sequence and comparative genome analysis of enteropathogenic Escherichia coli O127:H6 strain E2348/69.</title>
        <authorList>
            <person name="Iguchi A."/>
            <person name="Thomson N.R."/>
            <person name="Ogura Y."/>
            <person name="Saunders D."/>
            <person name="Ooka T."/>
            <person name="Henderson I.R."/>
            <person name="Harris D."/>
            <person name="Asadulghani M."/>
            <person name="Kurokawa K."/>
            <person name="Dean P."/>
            <person name="Kenny B."/>
            <person name="Quail M.A."/>
            <person name="Thurston S."/>
            <person name="Dougan G."/>
            <person name="Hayashi T."/>
            <person name="Parkhill J."/>
            <person name="Frankel G."/>
        </authorList>
    </citation>
    <scope>NUCLEOTIDE SEQUENCE [LARGE SCALE GENOMIC DNA]</scope>
    <source>
        <strain>E2348/69 / EPEC</strain>
    </source>
</reference>
<accession>B7UQH9</accession>
<sequence>MPIQVLPPQLANQIAAGEVVERPASVVKELVENSLDAGATRIDIDIERGGAKLIRIRDNGCGIKKDELALALARHATSKIASLDDLEAIISLGFRGEALASISSVSRLTLTSRTAEQQEAWQAYAEGRDMDVTVKPAAHPVGTTLEVLDLFYNTPARRKFLRTEKTEFNHIDEIIRRIALARFDVTINLSHNGKIVRQYRAVPEGGQKERRLGAICGTAFLEQALAIEWQHGDLTLRGWVADPNHTTPALAEIQYCYVNGRMMRDRLINHAIRQACEDKLGADQQPAFVLYLEIDPHQVDVNVHPAKHEVRFHQSRLVHDFIYQGVLSVLQQQLETPLPLDDEPQPAPRAIPENRVAAGRNHFAEPAVREPVAPLYTPAPASGSRPAAPWPNAQPGYQKQQGEVYRQLLQTPAPMQKPKAPEPQEPALAANSQSFGRVLTIVHSDCALLELDGNISLLALPVAERWLRQAQLTPGEAPVCAQPLLIPLRLKVSGEEKSALEKAQSALAELGIDFQSDAQHVTIRAVPLPLRQQNLQILIPELIGYLAKQSVFEPGNIAQWIARNLMSEHAQWSMAQAITLLADVERLCPQLVKTPPGGLLQSVDLHPAIKALKDE</sequence>
<name>MUTL_ECO27</name>
<comment type="function">
    <text evidence="1">This protein is involved in the repair of mismatches in DNA. It is required for dam-dependent methyl-directed DNA mismatch repair. May act as a 'molecular matchmaker', a protein that promotes the formation of a stable complex between two or more DNA-binding proteins in an ATP-dependent manner without itself being part of a final effector complex.</text>
</comment>
<comment type="similarity">
    <text evidence="1">Belongs to the DNA mismatch repair MutL/HexB family.</text>
</comment>
<dbReference type="EMBL" id="FM180568">
    <property type="protein sequence ID" value="CAS12041.1"/>
    <property type="molecule type" value="Genomic_DNA"/>
</dbReference>
<dbReference type="RefSeq" id="WP_001122470.1">
    <property type="nucleotide sequence ID" value="NC_011601.1"/>
</dbReference>
<dbReference type="SMR" id="B7UQH9"/>
<dbReference type="KEGG" id="ecg:E2348C_4493"/>
<dbReference type="HOGENOM" id="CLU_004131_5_1_6"/>
<dbReference type="Proteomes" id="UP000008205">
    <property type="component" value="Chromosome"/>
</dbReference>
<dbReference type="GO" id="GO:0032300">
    <property type="term" value="C:mismatch repair complex"/>
    <property type="evidence" value="ECO:0007669"/>
    <property type="project" value="InterPro"/>
</dbReference>
<dbReference type="GO" id="GO:0005524">
    <property type="term" value="F:ATP binding"/>
    <property type="evidence" value="ECO:0007669"/>
    <property type="project" value="InterPro"/>
</dbReference>
<dbReference type="GO" id="GO:0016887">
    <property type="term" value="F:ATP hydrolysis activity"/>
    <property type="evidence" value="ECO:0007669"/>
    <property type="project" value="InterPro"/>
</dbReference>
<dbReference type="GO" id="GO:0140664">
    <property type="term" value="F:ATP-dependent DNA damage sensor activity"/>
    <property type="evidence" value="ECO:0007669"/>
    <property type="project" value="InterPro"/>
</dbReference>
<dbReference type="GO" id="GO:0030983">
    <property type="term" value="F:mismatched DNA binding"/>
    <property type="evidence" value="ECO:0007669"/>
    <property type="project" value="InterPro"/>
</dbReference>
<dbReference type="GO" id="GO:0006298">
    <property type="term" value="P:mismatch repair"/>
    <property type="evidence" value="ECO:0007669"/>
    <property type="project" value="UniProtKB-UniRule"/>
</dbReference>
<dbReference type="CDD" id="cd16926">
    <property type="entry name" value="HATPase_MutL-MLH-PMS-like"/>
    <property type="match status" value="1"/>
</dbReference>
<dbReference type="CDD" id="cd03482">
    <property type="entry name" value="MutL_Trans_MutL"/>
    <property type="match status" value="1"/>
</dbReference>
<dbReference type="FunFam" id="3.30.230.10:FF:000013">
    <property type="entry name" value="DNA mismatch repair endonuclease MutL"/>
    <property type="match status" value="1"/>
</dbReference>
<dbReference type="FunFam" id="3.30.565.10:FF:000003">
    <property type="entry name" value="DNA mismatch repair endonuclease MutL"/>
    <property type="match status" value="1"/>
</dbReference>
<dbReference type="FunFam" id="3.30.1370.100:FF:000002">
    <property type="entry name" value="DNA mismatch repair protein MutL"/>
    <property type="match status" value="1"/>
</dbReference>
<dbReference type="Gene3D" id="3.30.230.10">
    <property type="match status" value="1"/>
</dbReference>
<dbReference type="Gene3D" id="3.30.565.10">
    <property type="entry name" value="Histidine kinase-like ATPase, C-terminal domain"/>
    <property type="match status" value="1"/>
</dbReference>
<dbReference type="Gene3D" id="3.30.1540.20">
    <property type="entry name" value="MutL, C-terminal domain, dimerisation subdomain"/>
    <property type="match status" value="1"/>
</dbReference>
<dbReference type="Gene3D" id="3.30.1370.100">
    <property type="entry name" value="MutL, C-terminal domain, regulatory subdomain"/>
    <property type="match status" value="1"/>
</dbReference>
<dbReference type="HAMAP" id="MF_00149">
    <property type="entry name" value="DNA_mis_repair"/>
    <property type="match status" value="1"/>
</dbReference>
<dbReference type="InterPro" id="IPR014762">
    <property type="entry name" value="DNA_mismatch_repair_CS"/>
</dbReference>
<dbReference type="InterPro" id="IPR020667">
    <property type="entry name" value="DNA_mismatch_repair_MutL"/>
</dbReference>
<dbReference type="InterPro" id="IPR013507">
    <property type="entry name" value="DNA_mismatch_S5_2-like"/>
</dbReference>
<dbReference type="InterPro" id="IPR036890">
    <property type="entry name" value="HATPase_C_sf"/>
</dbReference>
<dbReference type="InterPro" id="IPR002099">
    <property type="entry name" value="MutL/Mlh/PMS"/>
</dbReference>
<dbReference type="InterPro" id="IPR038973">
    <property type="entry name" value="MutL/Mlh/Pms-like"/>
</dbReference>
<dbReference type="InterPro" id="IPR014790">
    <property type="entry name" value="MutL_C"/>
</dbReference>
<dbReference type="InterPro" id="IPR042120">
    <property type="entry name" value="MutL_C_dimsub"/>
</dbReference>
<dbReference type="InterPro" id="IPR042121">
    <property type="entry name" value="MutL_C_regsub"/>
</dbReference>
<dbReference type="InterPro" id="IPR037198">
    <property type="entry name" value="MutL_C_sf"/>
</dbReference>
<dbReference type="InterPro" id="IPR020568">
    <property type="entry name" value="Ribosomal_Su5_D2-typ_SF"/>
</dbReference>
<dbReference type="InterPro" id="IPR014721">
    <property type="entry name" value="Ribsml_uS5_D2-typ_fold_subgr"/>
</dbReference>
<dbReference type="NCBIfam" id="TIGR00585">
    <property type="entry name" value="mutl"/>
    <property type="match status" value="1"/>
</dbReference>
<dbReference type="NCBIfam" id="NF000948">
    <property type="entry name" value="PRK00095.1-1"/>
    <property type="match status" value="1"/>
</dbReference>
<dbReference type="PANTHER" id="PTHR10073">
    <property type="entry name" value="DNA MISMATCH REPAIR PROTEIN MLH, PMS, MUTL"/>
    <property type="match status" value="1"/>
</dbReference>
<dbReference type="PANTHER" id="PTHR10073:SF12">
    <property type="entry name" value="DNA MISMATCH REPAIR PROTEIN MLH1"/>
    <property type="match status" value="1"/>
</dbReference>
<dbReference type="Pfam" id="PF01119">
    <property type="entry name" value="DNA_mis_repair"/>
    <property type="match status" value="1"/>
</dbReference>
<dbReference type="Pfam" id="PF13589">
    <property type="entry name" value="HATPase_c_3"/>
    <property type="match status" value="1"/>
</dbReference>
<dbReference type="Pfam" id="PF08676">
    <property type="entry name" value="MutL_C"/>
    <property type="match status" value="1"/>
</dbReference>
<dbReference type="SMART" id="SM01340">
    <property type="entry name" value="DNA_mis_repair"/>
    <property type="match status" value="1"/>
</dbReference>
<dbReference type="SMART" id="SM00853">
    <property type="entry name" value="MutL_C"/>
    <property type="match status" value="1"/>
</dbReference>
<dbReference type="SUPFAM" id="SSF55874">
    <property type="entry name" value="ATPase domain of HSP90 chaperone/DNA topoisomerase II/histidine kinase"/>
    <property type="match status" value="1"/>
</dbReference>
<dbReference type="SUPFAM" id="SSF118116">
    <property type="entry name" value="DNA mismatch repair protein MutL"/>
    <property type="match status" value="1"/>
</dbReference>
<dbReference type="SUPFAM" id="SSF54211">
    <property type="entry name" value="Ribosomal protein S5 domain 2-like"/>
    <property type="match status" value="1"/>
</dbReference>
<dbReference type="PROSITE" id="PS00058">
    <property type="entry name" value="DNA_MISMATCH_REPAIR_1"/>
    <property type="match status" value="1"/>
</dbReference>
<organism>
    <name type="scientific">Escherichia coli O127:H6 (strain E2348/69 / EPEC)</name>
    <dbReference type="NCBI Taxonomy" id="574521"/>
    <lineage>
        <taxon>Bacteria</taxon>
        <taxon>Pseudomonadati</taxon>
        <taxon>Pseudomonadota</taxon>
        <taxon>Gammaproteobacteria</taxon>
        <taxon>Enterobacterales</taxon>
        <taxon>Enterobacteriaceae</taxon>
        <taxon>Escherichia</taxon>
    </lineage>
</organism>
<feature type="chain" id="PRO_1000192173" description="DNA mismatch repair protein MutL">
    <location>
        <begin position="1"/>
        <end position="615"/>
    </location>
</feature>
<feature type="region of interest" description="Disordered" evidence="2">
    <location>
        <begin position="378"/>
        <end position="397"/>
    </location>
</feature>
<feature type="compositionally biased region" description="Low complexity" evidence="2">
    <location>
        <begin position="378"/>
        <end position="391"/>
    </location>
</feature>
<gene>
    <name evidence="1" type="primary">mutL</name>
    <name type="ordered locus">E2348C_4493</name>
</gene>